<evidence type="ECO:0000255" key="1">
    <source>
        <dbReference type="HAMAP-Rule" id="MF_01333"/>
    </source>
</evidence>
<evidence type="ECO:0000305" key="2"/>
<feature type="chain" id="PRO_1000086580" description="Large ribosomal subunit protein uL5">
    <location>
        <begin position="1"/>
        <end position="185"/>
    </location>
</feature>
<keyword id="KW-0687">Ribonucleoprotein</keyword>
<keyword id="KW-0689">Ribosomal protein</keyword>
<keyword id="KW-0694">RNA-binding</keyword>
<keyword id="KW-0699">rRNA-binding</keyword>
<keyword id="KW-0820">tRNA-binding</keyword>
<dbReference type="EMBL" id="AM260525">
    <property type="protein sequence ID" value="CAK01852.1"/>
    <property type="molecule type" value="Genomic_DNA"/>
</dbReference>
<dbReference type="RefSeq" id="WP_012231989.1">
    <property type="nucleotide sequence ID" value="NC_010161.1"/>
</dbReference>
<dbReference type="SMR" id="A9IW11"/>
<dbReference type="KEGG" id="btr:BT_1506"/>
<dbReference type="eggNOG" id="COG0094">
    <property type="taxonomic scope" value="Bacteria"/>
</dbReference>
<dbReference type="HOGENOM" id="CLU_061015_2_1_5"/>
<dbReference type="Proteomes" id="UP000001592">
    <property type="component" value="Chromosome"/>
</dbReference>
<dbReference type="GO" id="GO:1990904">
    <property type="term" value="C:ribonucleoprotein complex"/>
    <property type="evidence" value="ECO:0007669"/>
    <property type="project" value="UniProtKB-KW"/>
</dbReference>
<dbReference type="GO" id="GO:0005840">
    <property type="term" value="C:ribosome"/>
    <property type="evidence" value="ECO:0007669"/>
    <property type="project" value="UniProtKB-KW"/>
</dbReference>
<dbReference type="GO" id="GO:0019843">
    <property type="term" value="F:rRNA binding"/>
    <property type="evidence" value="ECO:0007669"/>
    <property type="project" value="UniProtKB-UniRule"/>
</dbReference>
<dbReference type="GO" id="GO:0003735">
    <property type="term" value="F:structural constituent of ribosome"/>
    <property type="evidence" value="ECO:0007669"/>
    <property type="project" value="InterPro"/>
</dbReference>
<dbReference type="GO" id="GO:0000049">
    <property type="term" value="F:tRNA binding"/>
    <property type="evidence" value="ECO:0007669"/>
    <property type="project" value="UniProtKB-UniRule"/>
</dbReference>
<dbReference type="GO" id="GO:0006412">
    <property type="term" value="P:translation"/>
    <property type="evidence" value="ECO:0007669"/>
    <property type="project" value="UniProtKB-UniRule"/>
</dbReference>
<dbReference type="FunFam" id="3.30.1440.10:FF:000001">
    <property type="entry name" value="50S ribosomal protein L5"/>
    <property type="match status" value="1"/>
</dbReference>
<dbReference type="Gene3D" id="3.30.1440.10">
    <property type="match status" value="1"/>
</dbReference>
<dbReference type="HAMAP" id="MF_01333_B">
    <property type="entry name" value="Ribosomal_uL5_B"/>
    <property type="match status" value="1"/>
</dbReference>
<dbReference type="InterPro" id="IPR002132">
    <property type="entry name" value="Ribosomal_uL5"/>
</dbReference>
<dbReference type="InterPro" id="IPR020930">
    <property type="entry name" value="Ribosomal_uL5_bac-type"/>
</dbReference>
<dbReference type="InterPro" id="IPR031309">
    <property type="entry name" value="Ribosomal_uL5_C"/>
</dbReference>
<dbReference type="InterPro" id="IPR020929">
    <property type="entry name" value="Ribosomal_uL5_CS"/>
</dbReference>
<dbReference type="InterPro" id="IPR022803">
    <property type="entry name" value="Ribosomal_uL5_dom_sf"/>
</dbReference>
<dbReference type="InterPro" id="IPR031310">
    <property type="entry name" value="Ribosomal_uL5_N"/>
</dbReference>
<dbReference type="NCBIfam" id="NF000585">
    <property type="entry name" value="PRK00010.1"/>
    <property type="match status" value="1"/>
</dbReference>
<dbReference type="PANTHER" id="PTHR11994">
    <property type="entry name" value="60S RIBOSOMAL PROTEIN L11-RELATED"/>
    <property type="match status" value="1"/>
</dbReference>
<dbReference type="Pfam" id="PF00281">
    <property type="entry name" value="Ribosomal_L5"/>
    <property type="match status" value="1"/>
</dbReference>
<dbReference type="Pfam" id="PF00673">
    <property type="entry name" value="Ribosomal_L5_C"/>
    <property type="match status" value="1"/>
</dbReference>
<dbReference type="PIRSF" id="PIRSF002161">
    <property type="entry name" value="Ribosomal_L5"/>
    <property type="match status" value="1"/>
</dbReference>
<dbReference type="SUPFAM" id="SSF55282">
    <property type="entry name" value="RL5-like"/>
    <property type="match status" value="1"/>
</dbReference>
<dbReference type="PROSITE" id="PS00358">
    <property type="entry name" value="RIBOSOMAL_L5"/>
    <property type="match status" value="1"/>
</dbReference>
<sequence>MAEERQIPRMKTHYFEVIRKALQEKFNYKNAMQIPRIDKIVINMGIGEATADSKKPSLAAEDLGLITGQKAVVTRARNSIATFKVREGMPLGAKVTLRKDRMFEFLDRLVTIALPRVRDFRGLNPKSFDGRGNFAMGIKEHIVFPEINYDKVDQIWGMDIIVCTTAKTDDEARELLRAFNFPFRS</sequence>
<reference key="1">
    <citation type="journal article" date="2007" name="Nat. Genet.">
        <title>Genomic analysis of Bartonella identifies type IV secretion systems as host adaptability factors.</title>
        <authorList>
            <person name="Saenz H.L."/>
            <person name="Engel P."/>
            <person name="Stoeckli M.C."/>
            <person name="Lanz C."/>
            <person name="Raddatz G."/>
            <person name="Vayssier-Taussat M."/>
            <person name="Birtles R."/>
            <person name="Schuster S.C."/>
            <person name="Dehio C."/>
        </authorList>
    </citation>
    <scope>NUCLEOTIDE SEQUENCE [LARGE SCALE GENOMIC DNA]</scope>
    <source>
        <strain>CIP 105476 / IBS 506</strain>
    </source>
</reference>
<comment type="function">
    <text evidence="1">This is one of the proteins that bind and probably mediate the attachment of the 5S RNA into the large ribosomal subunit, where it forms part of the central protuberance. In the 70S ribosome it contacts protein S13 of the 30S subunit (bridge B1b), connecting the 2 subunits; this bridge is implicated in subunit movement. Contacts the P site tRNA; the 5S rRNA and some of its associated proteins might help stabilize positioning of ribosome-bound tRNAs.</text>
</comment>
<comment type="subunit">
    <text evidence="1">Part of the 50S ribosomal subunit; part of the 5S rRNA/L5/L18/L25 subcomplex. Contacts the 5S rRNA and the P site tRNA. Forms a bridge to the 30S subunit in the 70S ribosome.</text>
</comment>
<comment type="similarity">
    <text evidence="1">Belongs to the universal ribosomal protein uL5 family.</text>
</comment>
<organism>
    <name type="scientific">Bartonella tribocorum (strain CIP 105476 / IBS 506)</name>
    <dbReference type="NCBI Taxonomy" id="382640"/>
    <lineage>
        <taxon>Bacteria</taxon>
        <taxon>Pseudomonadati</taxon>
        <taxon>Pseudomonadota</taxon>
        <taxon>Alphaproteobacteria</taxon>
        <taxon>Hyphomicrobiales</taxon>
        <taxon>Bartonellaceae</taxon>
        <taxon>Bartonella</taxon>
    </lineage>
</organism>
<name>RL5_BART1</name>
<proteinExistence type="inferred from homology"/>
<protein>
    <recommendedName>
        <fullName evidence="1">Large ribosomal subunit protein uL5</fullName>
    </recommendedName>
    <alternativeName>
        <fullName evidence="2">50S ribosomal protein L5</fullName>
    </alternativeName>
</protein>
<gene>
    <name evidence="1" type="primary">rplE</name>
    <name type="ordered locus">BT_1506</name>
</gene>
<accession>A9IW11</accession>